<keyword id="KW-0002">3D-structure</keyword>
<keyword id="KW-0903">Direct protein sequencing</keyword>
<keyword id="KW-0325">Glycoprotein</keyword>
<keyword id="KW-0326">Glycosidase</keyword>
<keyword id="KW-0378">Hydrolase</keyword>
<keyword id="KW-0964">Secreted</keyword>
<keyword id="KW-0732">Signal</keyword>
<gene>
    <name type="primary">endOF3</name>
</gene>
<organism>
    <name type="scientific">Elizabethkingia meningoseptica</name>
    <name type="common">Chryseobacterium meningosepticum</name>
    <dbReference type="NCBI Taxonomy" id="238"/>
    <lineage>
        <taxon>Bacteria</taxon>
        <taxon>Pseudomonadati</taxon>
        <taxon>Bacteroidota</taxon>
        <taxon>Flavobacteriia</taxon>
        <taxon>Flavobacteriales</taxon>
        <taxon>Weeksellaceae</taxon>
        <taxon>Elizabethkingia</taxon>
    </lineage>
</organism>
<dbReference type="EC" id="3.2.1.96"/>
<dbReference type="EMBL" id="L06332">
    <property type="protein sequence ID" value="AAA24924.1"/>
    <property type="molecule type" value="Genomic_DNA"/>
</dbReference>
<dbReference type="PIR" id="B46678">
    <property type="entry name" value="B46678"/>
</dbReference>
<dbReference type="PDB" id="1EOK">
    <property type="method" value="X-ray"/>
    <property type="resolution" value="1.80 A"/>
    <property type="chains" value="A=40-329"/>
</dbReference>
<dbReference type="PDB" id="1EOM">
    <property type="method" value="X-ray"/>
    <property type="resolution" value="2.10 A"/>
    <property type="chains" value="A=40-329"/>
</dbReference>
<dbReference type="PDBsum" id="1EOK"/>
<dbReference type="PDBsum" id="1EOM"/>
<dbReference type="SMR" id="P36913"/>
<dbReference type="CAZy" id="GH18">
    <property type="family name" value="Glycoside Hydrolase Family 18"/>
</dbReference>
<dbReference type="GlyCosmos" id="P36913">
    <property type="glycosylation" value="1 site, No reported glycans"/>
</dbReference>
<dbReference type="iPTMnet" id="P36913"/>
<dbReference type="EvolutionaryTrace" id="P36913"/>
<dbReference type="GO" id="GO:0005576">
    <property type="term" value="C:extracellular region"/>
    <property type="evidence" value="ECO:0007669"/>
    <property type="project" value="UniProtKB-SubCell"/>
</dbReference>
<dbReference type="GO" id="GO:0033925">
    <property type="term" value="F:mannosyl-glycoprotein endo-beta-N-acetylglucosaminidase activity"/>
    <property type="evidence" value="ECO:0007669"/>
    <property type="project" value="UniProtKB-EC"/>
</dbReference>
<dbReference type="GO" id="GO:0005975">
    <property type="term" value="P:carbohydrate metabolic process"/>
    <property type="evidence" value="ECO:0007669"/>
    <property type="project" value="InterPro"/>
</dbReference>
<dbReference type="CDD" id="cd06542">
    <property type="entry name" value="GH18_EndoS-like"/>
    <property type="match status" value="1"/>
</dbReference>
<dbReference type="Gene3D" id="3.20.20.80">
    <property type="entry name" value="Glycosidases"/>
    <property type="match status" value="1"/>
</dbReference>
<dbReference type="InterPro" id="IPR054978">
    <property type="entry name" value="Endoglyc_F3"/>
</dbReference>
<dbReference type="InterPro" id="IPR057016">
    <property type="entry name" value="EndoS_F2-like_TIM-barrel"/>
</dbReference>
<dbReference type="InterPro" id="IPR001223">
    <property type="entry name" value="Glyco_hydro18_cat"/>
</dbReference>
<dbReference type="InterPro" id="IPR017853">
    <property type="entry name" value="Glycoside_hydrolase_SF"/>
</dbReference>
<dbReference type="NCBIfam" id="NF045481">
    <property type="entry name" value="Endoglyc_F3"/>
    <property type="match status" value="1"/>
</dbReference>
<dbReference type="Pfam" id="PF23916">
    <property type="entry name" value="TIM-barrel_EndoS"/>
    <property type="match status" value="1"/>
</dbReference>
<dbReference type="SUPFAM" id="SSF51445">
    <property type="entry name" value="(Trans)glycosidases"/>
    <property type="match status" value="1"/>
</dbReference>
<dbReference type="PROSITE" id="PS51910">
    <property type="entry name" value="GH18_2"/>
    <property type="match status" value="1"/>
</dbReference>
<reference key="1">
    <citation type="journal article" date="1993" name="J. Biol. Chem.">
        <title>Multiple endoglycosidase F activities expressed by Flavobacterium meningosepticum endoglycosidases F2 and F3. Molecular cloning, primary sequence, and enzyme expression.</title>
        <authorList>
            <person name="Tarentino A.L."/>
            <person name="Quinones G."/>
            <person name="Changchien L.-M."/>
            <person name="Plummer T.H. Jr."/>
        </authorList>
    </citation>
    <scope>NUCLEOTIDE SEQUENCE [GENOMIC DNA]</scope>
    <scope>PARTIAL PROTEIN SEQUENCE</scope>
</reference>
<reference key="2">
    <citation type="journal article" date="1995" name="J. Biol. Chem.">
        <title>Novel, specific O-glycosylation of secreted Flavobacterium meningosepticum proteins. Asp-Ser and Asp-Thr-Thr consensus sites.</title>
        <authorList>
            <person name="Plummer T.H. Jr."/>
            <person name="Tarentino A.L."/>
            <person name="Hauer C.R."/>
        </authorList>
    </citation>
    <scope>GLYCOSYLATION AT THR-88</scope>
    <scope>IDENTIFICATION BY MASS SPECTROMETRY</scope>
</reference>
<reference key="3">
    <citation type="journal article" date="1995" name="J. Biol. Chem.">
        <title>Detailed structural analysis of a novel, specific O-linked glycan from the prokaryote Flavobacterium meningosepticum.</title>
        <authorList>
            <person name="Reinhold B.B."/>
            <person name="Hauer C.R."/>
            <person name="Plummer T.H. Jr."/>
            <person name="Reinhold V.N."/>
        </authorList>
    </citation>
    <scope>STRUCTURE OF CARBOHYDRATE</scope>
    <scope>IDENTIFICATION BY MASS SPECTROMETRY</scope>
</reference>
<evidence type="ECO:0000255" key="1">
    <source>
        <dbReference type="PROSITE-ProRule" id="PRU01258"/>
    </source>
</evidence>
<evidence type="ECO:0000269" key="2">
    <source>
    </source>
</evidence>
<evidence type="ECO:0000305" key="3"/>
<evidence type="ECO:0007829" key="4">
    <source>
        <dbReference type="PDB" id="1EOK"/>
    </source>
</evidence>
<evidence type="ECO:0007829" key="5">
    <source>
        <dbReference type="PDB" id="1EOM"/>
    </source>
</evidence>
<sequence>MKKIFFAQCSILLLMLGSCSKMTEDMTPESVNKEASVKSATALAGSNGVCIAYYITDGRNPTFKLKDIPDKVDMVILFGLKYWSLQDTTKLPGGTGMMGSFKSYKDLDTQIRSLQSRGIKVLQNIDDDVSWQSSKPGGFASAAAYGDAIKSIVIDKWKLDGISLDIEHSGAKPNPIPTFPGYAATGYNGWYSGSMAATPAFLNVISELTKYFGTTAPNNKQLQIASGIDVYAWNKIMENFRNNFNYIQLQSYGANVSRTQLMMNYATGTNKIPASKMVFGAYAEGGTNQANDVEVAKWTPTQGAKGGMMIYTYNSNVSYANAVRDAVKN</sequence>
<comment type="function">
    <text>Endohydrolysis of the di-N-acetylchitobiosyl unit in high-mannose glycopeptides and glycoproteins. Hydrolyzes bi- and triantennary glycans. The presence of a core-bound fucose greatly augments endo F3 activity on biantennary and, presumably, triantennary oligosaccharides.</text>
</comment>
<comment type="catalytic activity">
    <reaction>
        <text>an N(4)-(oligosaccharide-(1-&gt;3)-[oligosaccharide-(1-&gt;6)]-beta-D-Man-(1-&gt;4)-beta-D-GlcNAc-(1-&gt;4)-alpha-D-GlcNAc)-L-asparaginyl-[protein] + H2O = an oligosaccharide-(1-&gt;3)-[oligosaccharide-(1-&gt;6)]-beta-D-Man-(1-&gt;4)-D-GlcNAc + N(4)-(N-acetyl-beta-D-glucosaminyl)-L-asparaginyl-[protein]</text>
        <dbReference type="Rhea" id="RHEA:73067"/>
        <dbReference type="Rhea" id="RHEA-COMP:12603"/>
        <dbReference type="Rhea" id="RHEA-COMP:18176"/>
        <dbReference type="ChEBI" id="CHEBI:15377"/>
        <dbReference type="ChEBI" id="CHEBI:132248"/>
        <dbReference type="ChEBI" id="CHEBI:192714"/>
        <dbReference type="ChEBI" id="CHEBI:192715"/>
        <dbReference type="EC" id="3.2.1.96"/>
    </reaction>
</comment>
<comment type="subunit">
    <text>Monomer.</text>
</comment>
<comment type="subcellular location">
    <subcellularLocation>
        <location>Secreted</location>
    </subcellularLocation>
</comment>
<comment type="PTM">
    <text>Carbohydrate at Thr-88 consists of (2-OMe)Man1-4GlcNAcU1-4GlcU1-4Glc1-4(2-OMe)GlcU1-4[(2-OMe)Rham1-2]Man.</text>
</comment>
<comment type="similarity">
    <text evidence="3">Belongs to the glycosyl hydrolase 18 family.</text>
</comment>
<accession>P36913</accession>
<protein>
    <recommendedName>
        <fullName>Endo-beta-N-acetylglucosaminidase F3</fullName>
        <ecNumber>3.2.1.96</ecNumber>
    </recommendedName>
    <alternativeName>
        <fullName>Di-N-acetylchitobiosyl beta-N-acetylglucosaminidase F3</fullName>
    </alternativeName>
    <alternativeName>
        <fullName>Endoglycosidase F3</fullName>
    </alternativeName>
    <alternativeName>
        <fullName>Mannosyl-glycoprotein endo-beta-N-acetyl-glucosaminidase F3</fullName>
    </alternativeName>
</protein>
<proteinExistence type="evidence at protein level"/>
<feature type="signal peptide" description="Or 40, or 41">
    <location>
        <begin position="1"/>
        <end position="39"/>
    </location>
</feature>
<feature type="chain" id="PRO_0000011957" description="Endo-beta-N-acetylglucosaminidase F3">
    <location>
        <begin position="40"/>
        <end position="329"/>
    </location>
</feature>
<feature type="domain" description="GH18" evidence="1">
    <location>
        <begin position="48"/>
        <end position="329"/>
    </location>
</feature>
<feature type="active site" description="Proton donor" evidence="1">
    <location>
        <position position="167"/>
    </location>
</feature>
<feature type="glycosylation site" description="O-linked (Man...) threonine" evidence="2">
    <location>
        <position position="88"/>
    </location>
</feature>
<feature type="strand" evidence="4">
    <location>
        <begin position="49"/>
        <end position="55"/>
    </location>
</feature>
<feature type="helix" evidence="4">
    <location>
        <begin position="65"/>
        <end position="67"/>
    </location>
</feature>
<feature type="strand" evidence="4">
    <location>
        <begin position="74"/>
        <end position="80"/>
    </location>
</feature>
<feature type="helix" evidence="4">
    <location>
        <begin position="82"/>
        <end position="86"/>
    </location>
</feature>
<feature type="helix" evidence="4">
    <location>
        <begin position="96"/>
        <end position="98"/>
    </location>
</feature>
<feature type="strand" evidence="5">
    <location>
        <begin position="101"/>
        <end position="103"/>
    </location>
</feature>
<feature type="helix" evidence="4">
    <location>
        <begin position="104"/>
        <end position="115"/>
    </location>
</feature>
<feature type="turn" evidence="4">
    <location>
        <begin position="116"/>
        <end position="118"/>
    </location>
</feature>
<feature type="strand" evidence="4">
    <location>
        <begin position="120"/>
        <end position="126"/>
    </location>
</feature>
<feature type="helix" evidence="4">
    <location>
        <begin position="129"/>
        <end position="132"/>
    </location>
</feature>
<feature type="strand" evidence="4">
    <location>
        <begin position="133"/>
        <end position="135"/>
    </location>
</feature>
<feature type="helix" evidence="4">
    <location>
        <begin position="136"/>
        <end position="138"/>
    </location>
</feature>
<feature type="strand" evidence="4">
    <location>
        <begin position="139"/>
        <end position="141"/>
    </location>
</feature>
<feature type="helix" evidence="4">
    <location>
        <begin position="142"/>
        <end position="153"/>
    </location>
</feature>
<feature type="turn" evidence="4">
    <location>
        <begin position="154"/>
        <end position="157"/>
    </location>
</feature>
<feature type="strand" evidence="4">
    <location>
        <begin position="161"/>
        <end position="165"/>
    </location>
</feature>
<feature type="helix" evidence="4">
    <location>
        <begin position="182"/>
        <end position="185"/>
    </location>
</feature>
<feature type="strand" evidence="5">
    <location>
        <begin position="186"/>
        <end position="189"/>
    </location>
</feature>
<feature type="helix" evidence="4">
    <location>
        <begin position="199"/>
        <end position="208"/>
    </location>
</feature>
<feature type="turn" evidence="4">
    <location>
        <begin position="209"/>
        <end position="211"/>
    </location>
</feature>
<feature type="strand" evidence="4">
    <location>
        <begin position="216"/>
        <end position="218"/>
    </location>
</feature>
<feature type="strand" evidence="4">
    <location>
        <begin position="221"/>
        <end position="226"/>
    </location>
</feature>
<feature type="helix" evidence="4">
    <location>
        <begin position="233"/>
        <end position="240"/>
    </location>
</feature>
<feature type="turn" evidence="4">
    <location>
        <begin position="241"/>
        <end position="243"/>
    </location>
</feature>
<feature type="strand" evidence="4">
    <location>
        <begin position="245"/>
        <end position="249"/>
    </location>
</feature>
<feature type="helix" evidence="4">
    <location>
        <begin position="256"/>
        <end position="268"/>
    </location>
</feature>
<feature type="helix" evidence="4">
    <location>
        <begin position="274"/>
        <end position="276"/>
    </location>
</feature>
<feature type="strand" evidence="4">
    <location>
        <begin position="277"/>
        <end position="281"/>
    </location>
</feature>
<feature type="turn" evidence="4">
    <location>
        <begin position="283"/>
        <end position="285"/>
    </location>
</feature>
<feature type="helix" evidence="4">
    <location>
        <begin position="289"/>
        <end position="297"/>
    </location>
</feature>
<feature type="strand" evidence="4">
    <location>
        <begin position="307"/>
        <end position="310"/>
    </location>
</feature>
<feature type="helix" evidence="4">
    <location>
        <begin position="313"/>
        <end position="315"/>
    </location>
</feature>
<feature type="helix" evidence="4">
    <location>
        <begin position="317"/>
        <end position="327"/>
    </location>
</feature>
<name>EBA3_ELIME</name>